<accession>Q9MA83</accession>
<organism>
    <name type="scientific">Arabidopsis thaliana</name>
    <name type="common">Mouse-ear cress</name>
    <dbReference type="NCBI Taxonomy" id="3702"/>
    <lineage>
        <taxon>Eukaryota</taxon>
        <taxon>Viridiplantae</taxon>
        <taxon>Streptophyta</taxon>
        <taxon>Embryophyta</taxon>
        <taxon>Tracheophyta</taxon>
        <taxon>Spermatophyta</taxon>
        <taxon>Magnoliopsida</taxon>
        <taxon>eudicotyledons</taxon>
        <taxon>Gunneridae</taxon>
        <taxon>Pentapetalae</taxon>
        <taxon>rosids</taxon>
        <taxon>malvids</taxon>
        <taxon>Brassicales</taxon>
        <taxon>Brassicaceae</taxon>
        <taxon>Camelineae</taxon>
        <taxon>Arabidopsis</taxon>
    </lineage>
</organism>
<protein>
    <recommendedName>
        <fullName evidence="7">Receptor-like protein 30</fullName>
        <shortName evidence="7">AtRLP30</shortName>
    </recommendedName>
</protein>
<proteinExistence type="evidence at transcript level"/>
<sequence length="786" mass="87527">MIPSQSNSFSGSVITLYFFLLGSLVLRTLASSRLHYCRHDQRDALLEFKHEFPVSESKPSPSLSSWNKTSDCCFWEGVTCDDESGEVVSLDLSYVLLNNSLKPTSGLFKLQQLQNLTLSDCHLYGEVTSSLGNLSRLTHLDLSSNQLTGEVLASVSKLNQLRDLLLSENSFSGNIPTSFTNLTKLSSLDISSNQFTLENFSFILPNLTSLSSLNVASNHFKSTLPSDMSGLHNLKYFDVRENSFVGTFPTSLFTIPSLQIVYLEGNQFMGPIKFGNISSSSRLWDLNLADNKFDGPIPEYISEIHSLIVLDLSHNNLVGPIPTSISKLVNLQHLSLSNNTLEGEVPGCLWGLMTVTLSHNSFNSFGKSSSGALDGESMQELDLGSNSLGGPFPHWICKQRFLKYLDLSNNLFNGSIPPCLKNSTYWLKGLVLRNNSFSGFLPDVFVNASMLLSLDVSYNRLEGKLPKSLINCTGMELLNVGSNIIKDTFPSWLVSLPSLRVLILRSNAFYGSLYYDHISFGFQHLRLIDISQNGFSGTLSPLYFSNWREMVTSVLEENGSNIGTEDWYMGEKGPEFSHSNSMTMIYKGVETDFLRIPYFFRAIDFSGNRFFGNIPESVGLLKELRLLNLSGNSFTSNIPQSLANLTNLETLDLSRNQLSGHIPRDLGSLSFLSTMNFSHNLLEGPVPLGTQFQSQHCSTFMDNLRLYGLEKICGKAHAPSSTPLESEEFSEPEEQVINWIAAAIAYGPGVFCGLVIGHIFFTAHKHEWFMEKFHRNKRRVVTTSAR</sequence>
<evidence type="ECO:0000255" key="1"/>
<evidence type="ECO:0000255" key="2">
    <source>
        <dbReference type="PROSITE-ProRule" id="PRU00498"/>
    </source>
</evidence>
<evidence type="ECO:0000269" key="3">
    <source>
    </source>
</evidence>
<evidence type="ECO:0000269" key="4">
    <source>
    </source>
</evidence>
<evidence type="ECO:0000269" key="5">
    <source>
    </source>
</evidence>
<evidence type="ECO:0000269" key="6">
    <source>
    </source>
</evidence>
<evidence type="ECO:0000303" key="7">
    <source>
    </source>
</evidence>
<evidence type="ECO:0000305" key="8"/>
<evidence type="ECO:0000312" key="9">
    <source>
        <dbReference type="Araport" id="AT3G05360"/>
    </source>
</evidence>
<evidence type="ECO:0000312" key="10">
    <source>
        <dbReference type="EMBL" id="AAF27042.1"/>
    </source>
</evidence>
<feature type="signal peptide" evidence="1">
    <location>
        <begin position="1"/>
        <end position="30"/>
    </location>
</feature>
<feature type="chain" id="PRO_0000436182" description="Receptor-like protein 30">
    <location>
        <begin position="31"/>
        <end position="786"/>
    </location>
</feature>
<feature type="topological domain" description="Extracellular" evidence="1">
    <location>
        <begin position="31"/>
        <end position="739"/>
    </location>
</feature>
<feature type="transmembrane region" description="Helical" evidence="1">
    <location>
        <begin position="740"/>
        <end position="760"/>
    </location>
</feature>
<feature type="topological domain" description="Cytoplasmic" evidence="1">
    <location>
        <begin position="761"/>
        <end position="786"/>
    </location>
</feature>
<feature type="repeat" description="LRR 1" evidence="1">
    <location>
        <begin position="110"/>
        <end position="133"/>
    </location>
</feature>
<feature type="repeat" description="LRR 2" evidence="1">
    <location>
        <begin position="134"/>
        <end position="158"/>
    </location>
</feature>
<feature type="repeat" description="LRR 3" evidence="1">
    <location>
        <begin position="159"/>
        <end position="181"/>
    </location>
</feature>
<feature type="repeat" description="LRR 4" evidence="1">
    <location>
        <begin position="183"/>
        <end position="204"/>
    </location>
</feature>
<feature type="repeat" description="LRR 5" evidence="1">
    <location>
        <begin position="207"/>
        <end position="231"/>
    </location>
</feature>
<feature type="repeat" description="LRR 6" evidence="1">
    <location>
        <begin position="233"/>
        <end position="255"/>
    </location>
</feature>
<feature type="repeat" description="LRR 7" evidence="1">
    <location>
        <begin position="257"/>
        <end position="279"/>
    </location>
</feature>
<feature type="repeat" description="LRR 8" evidence="1">
    <location>
        <begin position="280"/>
        <end position="304"/>
    </location>
</feature>
<feature type="repeat" description="LRR 9" evidence="1">
    <location>
        <begin position="305"/>
        <end position="328"/>
    </location>
</feature>
<feature type="repeat" description="LRR 10" evidence="1">
    <location>
        <begin position="329"/>
        <end position="352"/>
    </location>
</feature>
<feature type="repeat" description="LRR 11" evidence="1">
    <location>
        <begin position="354"/>
        <end position="375"/>
    </location>
</feature>
<feature type="repeat" description="LRR 12" evidence="1">
    <location>
        <begin position="376"/>
        <end position="399"/>
    </location>
</feature>
<feature type="repeat" description="LRR 13" evidence="1">
    <location>
        <begin position="400"/>
        <end position="423"/>
    </location>
</feature>
<feature type="repeat" description="LRR 14" evidence="1">
    <location>
        <begin position="425"/>
        <end position="447"/>
    </location>
</feature>
<feature type="repeat" description="LRR 15" evidence="1">
    <location>
        <begin position="448"/>
        <end position="472"/>
    </location>
</feature>
<feature type="repeat" description="LRR 16" evidence="1">
    <location>
        <begin position="474"/>
        <end position="496"/>
    </location>
</feature>
<feature type="repeat" description="LRR 17" evidence="1">
    <location>
        <begin position="497"/>
        <end position="524"/>
    </location>
</feature>
<feature type="repeat" description="LRR 18" evidence="1">
    <location>
        <begin position="526"/>
        <end position="546"/>
    </location>
</feature>
<feature type="repeat" description="LRR 19" evidence="1">
    <location>
        <begin position="596"/>
        <end position="621"/>
    </location>
</feature>
<feature type="repeat" description="LRR 20" evidence="1">
    <location>
        <begin position="622"/>
        <end position="645"/>
    </location>
</feature>
<feature type="repeat" description="LRR 21" evidence="1">
    <location>
        <begin position="646"/>
        <end position="669"/>
    </location>
</feature>
<feature type="repeat" description="LRR 22" evidence="1">
    <location>
        <begin position="671"/>
        <end position="694"/>
    </location>
</feature>
<feature type="glycosylation site" description="N-linked (GlcNAc...) asparagine" evidence="2">
    <location>
        <position position="67"/>
    </location>
</feature>
<feature type="glycosylation site" description="N-linked (GlcNAc...) asparagine" evidence="2">
    <location>
        <position position="98"/>
    </location>
</feature>
<feature type="glycosylation site" description="N-linked (GlcNAc...) asparagine" evidence="2">
    <location>
        <position position="115"/>
    </location>
</feature>
<feature type="glycosylation site" description="N-linked (GlcNAc...) asparagine" evidence="2">
    <location>
        <position position="133"/>
    </location>
</feature>
<feature type="glycosylation site" description="N-linked (GlcNAc...) asparagine" evidence="2">
    <location>
        <position position="181"/>
    </location>
</feature>
<feature type="glycosylation site" description="N-linked (GlcNAc...) asparagine" evidence="2">
    <location>
        <position position="199"/>
    </location>
</feature>
<feature type="glycosylation site" description="N-linked (GlcNAc...) asparagine" evidence="2">
    <location>
        <position position="206"/>
    </location>
</feature>
<feature type="glycosylation site" description="N-linked (GlcNAc...) asparagine" evidence="2">
    <location>
        <position position="276"/>
    </location>
</feature>
<feature type="glycosylation site" description="N-linked (GlcNAc...) asparagine" evidence="2">
    <location>
        <position position="338"/>
    </location>
</feature>
<feature type="glycosylation site" description="N-linked (GlcNAc...) asparagine" evidence="2">
    <location>
        <position position="413"/>
    </location>
</feature>
<feature type="glycosylation site" description="N-linked (GlcNAc...) asparagine" evidence="2">
    <location>
        <position position="422"/>
    </location>
</feature>
<feature type="glycosylation site" description="N-linked (GlcNAc...) asparagine" evidence="2">
    <location>
        <position position="434"/>
    </location>
</feature>
<feature type="glycosylation site" description="N-linked (GlcNAc...) asparagine" evidence="2">
    <location>
        <position position="447"/>
    </location>
</feature>
<feature type="glycosylation site" description="N-linked (GlcNAc...) asparagine" evidence="2">
    <location>
        <position position="471"/>
    </location>
</feature>
<feature type="glycosylation site" description="N-linked (GlcNAc...) asparagine" evidence="2">
    <location>
        <position position="558"/>
    </location>
</feature>
<feature type="glycosylation site" description="N-linked (GlcNAc...) asparagine" evidence="2">
    <location>
        <position position="628"/>
    </location>
</feature>
<feature type="glycosylation site" description="N-linked (GlcNAc...) asparagine" evidence="2">
    <location>
        <position position="644"/>
    </location>
</feature>
<feature type="glycosylation site" description="N-linked (GlcNAc...) asparagine" evidence="2">
    <location>
        <position position="676"/>
    </location>
</feature>
<name>RLP30_ARATH</name>
<dbReference type="EMBL" id="AC009177">
    <property type="protein sequence ID" value="AAF27042.1"/>
    <property type="molecule type" value="Genomic_DNA"/>
</dbReference>
<dbReference type="EMBL" id="CP002686">
    <property type="protein sequence ID" value="AEE74225.1"/>
    <property type="molecule type" value="Genomic_DNA"/>
</dbReference>
<dbReference type="EMBL" id="AY091056">
    <property type="protein sequence ID" value="AAM13877.1"/>
    <property type="molecule type" value="mRNA"/>
</dbReference>
<dbReference type="EMBL" id="AY117362">
    <property type="protein sequence ID" value="AAM51437.1"/>
    <property type="molecule type" value="mRNA"/>
</dbReference>
<dbReference type="RefSeq" id="NP_187187.1">
    <property type="nucleotide sequence ID" value="NM_111409.3"/>
</dbReference>
<dbReference type="SMR" id="Q9MA83"/>
<dbReference type="FunCoup" id="Q9MA83">
    <property type="interactions" value="1"/>
</dbReference>
<dbReference type="IntAct" id="Q9MA83">
    <property type="interactions" value="49"/>
</dbReference>
<dbReference type="STRING" id="3702.Q9MA83"/>
<dbReference type="GlyCosmos" id="Q9MA83">
    <property type="glycosylation" value="18 sites, No reported glycans"/>
</dbReference>
<dbReference type="GlyGen" id="Q9MA83">
    <property type="glycosylation" value="18 sites"/>
</dbReference>
<dbReference type="PaxDb" id="3702-AT3G05360.1"/>
<dbReference type="ProteomicsDB" id="228106"/>
<dbReference type="EnsemblPlants" id="AT3G05360.1">
    <property type="protein sequence ID" value="AT3G05360.1"/>
    <property type="gene ID" value="AT3G05360"/>
</dbReference>
<dbReference type="GeneID" id="819700"/>
<dbReference type="Gramene" id="AT3G05360.1">
    <property type="protein sequence ID" value="AT3G05360.1"/>
    <property type="gene ID" value="AT3G05360"/>
</dbReference>
<dbReference type="KEGG" id="ath:AT3G05360"/>
<dbReference type="Araport" id="AT3G05360"/>
<dbReference type="TAIR" id="AT3G05360">
    <property type="gene designation" value="RLP30"/>
</dbReference>
<dbReference type="eggNOG" id="KOG0619">
    <property type="taxonomic scope" value="Eukaryota"/>
</dbReference>
<dbReference type="HOGENOM" id="CLU_000288_18_3_1"/>
<dbReference type="InParanoid" id="Q9MA83"/>
<dbReference type="OMA" id="WICKFRS"/>
<dbReference type="PhylomeDB" id="Q9MA83"/>
<dbReference type="PRO" id="PR:Q9MA83"/>
<dbReference type="Proteomes" id="UP000006548">
    <property type="component" value="Chromosome 3"/>
</dbReference>
<dbReference type="ExpressionAtlas" id="Q9MA83">
    <property type="expression patterns" value="baseline and differential"/>
</dbReference>
<dbReference type="GO" id="GO:0005886">
    <property type="term" value="C:plasma membrane"/>
    <property type="evidence" value="ECO:0000314"/>
    <property type="project" value="UniProtKB"/>
</dbReference>
<dbReference type="GO" id="GO:0050832">
    <property type="term" value="P:defense response to fungus"/>
    <property type="evidence" value="ECO:0000315"/>
    <property type="project" value="UniProtKB"/>
</dbReference>
<dbReference type="GO" id="GO:0032491">
    <property type="term" value="P:detection of molecule of fungal origin"/>
    <property type="evidence" value="ECO:0000315"/>
    <property type="project" value="UniProtKB"/>
</dbReference>
<dbReference type="GO" id="GO:0009620">
    <property type="term" value="P:response to fungus"/>
    <property type="evidence" value="ECO:0000270"/>
    <property type="project" value="UniProtKB"/>
</dbReference>
<dbReference type="GO" id="GO:0010555">
    <property type="term" value="P:response to mannitol"/>
    <property type="evidence" value="ECO:0000315"/>
    <property type="project" value="UniProtKB"/>
</dbReference>
<dbReference type="GO" id="GO:0002237">
    <property type="term" value="P:response to molecule of bacterial origin"/>
    <property type="evidence" value="ECO:0000270"/>
    <property type="project" value="UniProtKB"/>
</dbReference>
<dbReference type="GO" id="GO:0002238">
    <property type="term" value="P:response to molecule of fungal origin"/>
    <property type="evidence" value="ECO:0000270"/>
    <property type="project" value="UniProtKB"/>
</dbReference>
<dbReference type="GO" id="GO:0002240">
    <property type="term" value="P:response to molecule of oomycetes origin"/>
    <property type="evidence" value="ECO:0000270"/>
    <property type="project" value="UniProtKB"/>
</dbReference>
<dbReference type="GO" id="GO:0009651">
    <property type="term" value="P:response to salt stress"/>
    <property type="evidence" value="ECO:0000315"/>
    <property type="project" value="UniProtKB"/>
</dbReference>
<dbReference type="FunFam" id="3.80.10.10:FF:002014">
    <property type="entry name" value="Receptor-like protein 30"/>
    <property type="match status" value="1"/>
</dbReference>
<dbReference type="FunFam" id="3.80.10.10:FF:000713">
    <property type="entry name" value="Receptor-like protein 48"/>
    <property type="match status" value="1"/>
</dbReference>
<dbReference type="FunFam" id="3.80.10.10:FF:000213">
    <property type="entry name" value="Tyrosine-sulfated glycopeptide receptor 1"/>
    <property type="match status" value="1"/>
</dbReference>
<dbReference type="Gene3D" id="3.80.10.10">
    <property type="entry name" value="Ribonuclease Inhibitor"/>
    <property type="match status" value="4"/>
</dbReference>
<dbReference type="InterPro" id="IPR001611">
    <property type="entry name" value="Leu-rich_rpt"/>
</dbReference>
<dbReference type="InterPro" id="IPR003591">
    <property type="entry name" value="Leu-rich_rpt_typical-subtyp"/>
</dbReference>
<dbReference type="InterPro" id="IPR032675">
    <property type="entry name" value="LRR_dom_sf"/>
</dbReference>
<dbReference type="InterPro" id="IPR013210">
    <property type="entry name" value="LRR_N_plant-typ"/>
</dbReference>
<dbReference type="InterPro" id="IPR046956">
    <property type="entry name" value="RLP23-like"/>
</dbReference>
<dbReference type="PANTHER" id="PTHR48061">
    <property type="entry name" value="LEUCINE-RICH REPEAT RECEPTOR PROTEIN KINASE EMS1-LIKE-RELATED"/>
    <property type="match status" value="1"/>
</dbReference>
<dbReference type="PANTHER" id="PTHR48061:SF46">
    <property type="entry name" value="LEUCINE-RICH REPEAT-CONTAINING N-TERMINAL PLANT-TYPE DOMAIN-CONTAINING PROTEIN"/>
    <property type="match status" value="1"/>
</dbReference>
<dbReference type="Pfam" id="PF00560">
    <property type="entry name" value="LRR_1"/>
    <property type="match status" value="7"/>
</dbReference>
<dbReference type="Pfam" id="PF13855">
    <property type="entry name" value="LRR_8"/>
    <property type="match status" value="2"/>
</dbReference>
<dbReference type="Pfam" id="PF08263">
    <property type="entry name" value="LRRNT_2"/>
    <property type="match status" value="1"/>
</dbReference>
<dbReference type="PRINTS" id="PR00019">
    <property type="entry name" value="LEURICHRPT"/>
</dbReference>
<dbReference type="SMART" id="SM00365">
    <property type="entry name" value="LRR_SD22"/>
    <property type="match status" value="4"/>
</dbReference>
<dbReference type="SMART" id="SM00369">
    <property type="entry name" value="LRR_TYP"/>
    <property type="match status" value="6"/>
</dbReference>
<dbReference type="SUPFAM" id="SSF52058">
    <property type="entry name" value="L domain-like"/>
    <property type="match status" value="2"/>
</dbReference>
<dbReference type="PROSITE" id="PS51450">
    <property type="entry name" value="LRR"/>
    <property type="match status" value="11"/>
</dbReference>
<comment type="function">
    <text evidence="3 4">Receptor for microbe-associated molecular patterns (MAMPs) that induces a BAK1-dependent basal immune response to necrotrophic fungi (e.g. S.sclerotiorum) in the presence of MAMPs (e.g. flg22 and SCLEROTINIA CULTURE FILTRATE ELICITOR1 (SCFE1) from the necrotrophic fungal pathogen S.sclerotiorum). Functionality seems to depend on the presence of the receptor kinase SOBIR1 as an adapter protein (PubMed:24104566). Required for full non-host resistance to bacterial pathogens (e.g. P.syringae pv phaseolicola) (PubMed:18434605).</text>
</comment>
<comment type="subcellular location">
    <subcellularLocation>
        <location evidence="3">Cell membrane</location>
        <topology evidence="1">Single-pass type I membrane protein</topology>
    </subcellularLocation>
</comment>
<comment type="induction">
    <text evidence="3 5 6">Induced by microbe-associated molecular patterns (MAMPs) such as LPS, HrpZ, flg22 and oomycete-(NPP1) (PubMed:18434605). Accumulates upon infection by the soil-borne necrotrophic pathogen F.oxysporum f. sp. lentis and associated with nitric oxide (NO) production; this induction is prevented by the plant growth promoting saprophytic fungus T.asperelloides (PubMed:24283937). Induced by NaCl and mannitol (PubMed:27099374).</text>
</comment>
<comment type="disruption phenotype">
    <text evidence="3 4">Reduced basal defense leading to an increased susceptibility to the non-host bacteria such as P.syringae pv phaseolicola (Psp 1448A) (PubMed:18434605). Increased susceptibility to S.sclerotiorum strain 1980 and to the related fungus B.cinerea. Impaired SCLEROTINIA CULTURE FILTRATE ELICITOR1- (SCFE1) and flg22-dependent ethylene production (PubMed:24104566).</text>
</comment>
<comment type="similarity">
    <text evidence="8">Belongs to the RLP family.</text>
</comment>
<gene>
    <name evidence="7" type="primary">RLP30</name>
    <name evidence="9" type="ordered locus">At3g05360</name>
    <name evidence="10" type="ORF">T12H1.33</name>
</gene>
<reference key="1">
    <citation type="journal article" date="2000" name="Nature">
        <title>Sequence and analysis of chromosome 3 of the plant Arabidopsis thaliana.</title>
        <authorList>
            <person name="Salanoubat M."/>
            <person name="Lemcke K."/>
            <person name="Rieger M."/>
            <person name="Ansorge W."/>
            <person name="Unseld M."/>
            <person name="Fartmann B."/>
            <person name="Valle G."/>
            <person name="Bloecker H."/>
            <person name="Perez-Alonso M."/>
            <person name="Obermaier B."/>
            <person name="Delseny M."/>
            <person name="Boutry M."/>
            <person name="Grivell L.A."/>
            <person name="Mache R."/>
            <person name="Puigdomenech P."/>
            <person name="De Simone V."/>
            <person name="Choisne N."/>
            <person name="Artiguenave F."/>
            <person name="Robert C."/>
            <person name="Brottier P."/>
            <person name="Wincker P."/>
            <person name="Cattolico L."/>
            <person name="Weissenbach J."/>
            <person name="Saurin W."/>
            <person name="Quetier F."/>
            <person name="Schaefer M."/>
            <person name="Mueller-Auer S."/>
            <person name="Gabel C."/>
            <person name="Fuchs M."/>
            <person name="Benes V."/>
            <person name="Wurmbach E."/>
            <person name="Drzonek H."/>
            <person name="Erfle H."/>
            <person name="Jordan N."/>
            <person name="Bangert S."/>
            <person name="Wiedelmann R."/>
            <person name="Kranz H."/>
            <person name="Voss H."/>
            <person name="Holland R."/>
            <person name="Brandt P."/>
            <person name="Nyakatura G."/>
            <person name="Vezzi A."/>
            <person name="D'Angelo M."/>
            <person name="Pallavicini A."/>
            <person name="Toppo S."/>
            <person name="Simionati B."/>
            <person name="Conrad A."/>
            <person name="Hornischer K."/>
            <person name="Kauer G."/>
            <person name="Loehnert T.-H."/>
            <person name="Nordsiek G."/>
            <person name="Reichelt J."/>
            <person name="Scharfe M."/>
            <person name="Schoen O."/>
            <person name="Bargues M."/>
            <person name="Terol J."/>
            <person name="Climent J."/>
            <person name="Navarro P."/>
            <person name="Collado C."/>
            <person name="Perez-Perez A."/>
            <person name="Ottenwaelder B."/>
            <person name="Duchemin D."/>
            <person name="Cooke R."/>
            <person name="Laudie M."/>
            <person name="Berger-Llauro C."/>
            <person name="Purnelle B."/>
            <person name="Masuy D."/>
            <person name="de Haan M."/>
            <person name="Maarse A.C."/>
            <person name="Alcaraz J.-P."/>
            <person name="Cottet A."/>
            <person name="Casacuberta E."/>
            <person name="Monfort A."/>
            <person name="Argiriou A."/>
            <person name="Flores M."/>
            <person name="Liguori R."/>
            <person name="Vitale D."/>
            <person name="Mannhaupt G."/>
            <person name="Haase D."/>
            <person name="Schoof H."/>
            <person name="Rudd S."/>
            <person name="Zaccaria P."/>
            <person name="Mewes H.-W."/>
            <person name="Mayer K.F.X."/>
            <person name="Kaul S."/>
            <person name="Town C.D."/>
            <person name="Koo H.L."/>
            <person name="Tallon L.J."/>
            <person name="Jenkins J."/>
            <person name="Rooney T."/>
            <person name="Rizzo M."/>
            <person name="Walts A."/>
            <person name="Utterback T."/>
            <person name="Fujii C.Y."/>
            <person name="Shea T.P."/>
            <person name="Creasy T.H."/>
            <person name="Haas B."/>
            <person name="Maiti R."/>
            <person name="Wu D."/>
            <person name="Peterson J."/>
            <person name="Van Aken S."/>
            <person name="Pai G."/>
            <person name="Militscher J."/>
            <person name="Sellers P."/>
            <person name="Gill J.E."/>
            <person name="Feldblyum T.V."/>
            <person name="Preuss D."/>
            <person name="Lin X."/>
            <person name="Nierman W.C."/>
            <person name="Salzberg S.L."/>
            <person name="White O."/>
            <person name="Venter J.C."/>
            <person name="Fraser C.M."/>
            <person name="Kaneko T."/>
            <person name="Nakamura Y."/>
            <person name="Sato S."/>
            <person name="Kato T."/>
            <person name="Asamizu E."/>
            <person name="Sasamoto S."/>
            <person name="Kimura T."/>
            <person name="Idesawa K."/>
            <person name="Kawashima K."/>
            <person name="Kishida Y."/>
            <person name="Kiyokawa C."/>
            <person name="Kohara M."/>
            <person name="Matsumoto M."/>
            <person name="Matsuno A."/>
            <person name="Muraki A."/>
            <person name="Nakayama S."/>
            <person name="Nakazaki N."/>
            <person name="Shinpo S."/>
            <person name="Takeuchi C."/>
            <person name="Wada T."/>
            <person name="Watanabe A."/>
            <person name="Yamada M."/>
            <person name="Yasuda M."/>
            <person name="Tabata S."/>
        </authorList>
    </citation>
    <scope>NUCLEOTIDE SEQUENCE [LARGE SCALE GENOMIC DNA]</scope>
    <source>
        <strain>cv. Columbia</strain>
    </source>
</reference>
<reference key="2">
    <citation type="journal article" date="2017" name="Plant J.">
        <title>Araport11: a complete reannotation of the Arabidopsis thaliana reference genome.</title>
        <authorList>
            <person name="Cheng C.Y."/>
            <person name="Krishnakumar V."/>
            <person name="Chan A.P."/>
            <person name="Thibaud-Nissen F."/>
            <person name="Schobel S."/>
            <person name="Town C.D."/>
        </authorList>
    </citation>
    <scope>GENOME REANNOTATION</scope>
    <source>
        <strain>cv. Columbia</strain>
    </source>
</reference>
<reference key="3">
    <citation type="journal article" date="2003" name="Science">
        <title>Empirical analysis of transcriptional activity in the Arabidopsis genome.</title>
        <authorList>
            <person name="Yamada K."/>
            <person name="Lim J."/>
            <person name="Dale J.M."/>
            <person name="Chen H."/>
            <person name="Shinn P."/>
            <person name="Palm C.J."/>
            <person name="Southwick A.M."/>
            <person name="Wu H.C."/>
            <person name="Kim C.J."/>
            <person name="Nguyen M."/>
            <person name="Pham P.K."/>
            <person name="Cheuk R.F."/>
            <person name="Karlin-Newmann G."/>
            <person name="Liu S.X."/>
            <person name="Lam B."/>
            <person name="Sakano H."/>
            <person name="Wu T."/>
            <person name="Yu G."/>
            <person name="Miranda M."/>
            <person name="Quach H.L."/>
            <person name="Tripp M."/>
            <person name="Chang C.H."/>
            <person name="Lee J.M."/>
            <person name="Toriumi M.J."/>
            <person name="Chan M.M."/>
            <person name="Tang C.C."/>
            <person name="Onodera C.S."/>
            <person name="Deng J.M."/>
            <person name="Akiyama K."/>
            <person name="Ansari Y."/>
            <person name="Arakawa T."/>
            <person name="Banh J."/>
            <person name="Banno F."/>
            <person name="Bowser L."/>
            <person name="Brooks S.Y."/>
            <person name="Carninci P."/>
            <person name="Chao Q."/>
            <person name="Choy N."/>
            <person name="Enju A."/>
            <person name="Goldsmith A.D."/>
            <person name="Gurjal M."/>
            <person name="Hansen N.F."/>
            <person name="Hayashizaki Y."/>
            <person name="Johnson-Hopson C."/>
            <person name="Hsuan V.W."/>
            <person name="Iida K."/>
            <person name="Karnes M."/>
            <person name="Khan S."/>
            <person name="Koesema E."/>
            <person name="Ishida J."/>
            <person name="Jiang P.X."/>
            <person name="Jones T."/>
            <person name="Kawai J."/>
            <person name="Kamiya A."/>
            <person name="Meyers C."/>
            <person name="Nakajima M."/>
            <person name="Narusaka M."/>
            <person name="Seki M."/>
            <person name="Sakurai T."/>
            <person name="Satou M."/>
            <person name="Tamse R."/>
            <person name="Vaysberg M."/>
            <person name="Wallender E.K."/>
            <person name="Wong C."/>
            <person name="Yamamura Y."/>
            <person name="Yuan S."/>
            <person name="Shinozaki K."/>
            <person name="Davis R.W."/>
            <person name="Theologis A."/>
            <person name="Ecker J.R."/>
        </authorList>
    </citation>
    <scope>NUCLEOTIDE SEQUENCE [LARGE SCALE MRNA]</scope>
    <source>
        <strain>cv. Columbia</strain>
    </source>
</reference>
<reference key="4">
    <citation type="journal article" date="2005" name="Plant Physiol.">
        <title>Phylogenomic analysis of the receptor-like proteins of rice and Arabidopsis.</title>
        <authorList>
            <person name="Fritz-Laylin L.K."/>
            <person name="Krishnamurthy N."/>
            <person name="Toer M."/>
            <person name="Sjoelander K.V."/>
            <person name="Jones J.D."/>
        </authorList>
    </citation>
    <scope>GENE FAMILY</scope>
</reference>
<reference key="5">
    <citation type="journal article" date="2008" name="Plant Physiol.">
        <title>A genome-wide functional investigation into the roles of receptor-like proteins in Arabidopsis.</title>
        <authorList>
            <person name="Wang G."/>
            <person name="Ellendorff U."/>
            <person name="Kemp B."/>
            <person name="Mansfield J.W."/>
            <person name="Forsyth A."/>
            <person name="Mitchell K."/>
            <person name="Bastas K."/>
            <person name="Liu C.-M."/>
            <person name="Woods-Toer A."/>
            <person name="Zipfel C."/>
            <person name="de Wit P.J.G.M."/>
            <person name="Jones J.D.G."/>
            <person name="Toer M."/>
            <person name="Thomma B.P.H.J."/>
        </authorList>
    </citation>
    <scope>FUNCTION</scope>
    <scope>DISRUPTION PHENOTYPE</scope>
    <scope>SUBCELLULAR LOCATION</scope>
    <scope>INDUCTION BY MAMPS</scope>
    <scope>GENE FAMILY</scope>
    <scope>NOMENCLATURE</scope>
    <source>
        <strain>cv. Columbia</strain>
    </source>
</reference>
<reference key="6">
    <citation type="journal article" date="2013" name="Plant Cell">
        <title>Arabidopsis receptor-like protein30 and receptor-like kinase suppressor of BIR1-1/EVERSHED mediate innate immunity to necrotrophic fungi.</title>
        <authorList>
            <person name="Zhang W."/>
            <person name="Fraiture M."/>
            <person name="Kolb D."/>
            <person name="Loeffelhardt B."/>
            <person name="Desaki Y."/>
            <person name="Boutrot F.F."/>
            <person name="Toer M."/>
            <person name="Zipfel C."/>
            <person name="Gust A.A."/>
            <person name="Brunner F."/>
        </authorList>
    </citation>
    <scope>FUNCTION</scope>
    <scope>DISRUPTION PHENOTYPE</scope>
    <source>
        <strain>cv. Columbia</strain>
    </source>
</reference>
<reference key="7">
    <citation type="journal article" date="2014" name="Curr. Opin. Plant Biol.">
        <title>Receptor like proteins associate with SOBIR1-type of adaptors to form bimolecular receptor kinases.</title>
        <authorList>
            <person name="Gust A.A."/>
            <person name="Felix G."/>
        </authorList>
    </citation>
    <scope>REVIEW</scope>
</reference>
<reference key="8">
    <citation type="journal article" date="2014" name="Mol. Plant Microbe Interact.">
        <title>Trichoderma asperelloides suppresses nitric oxide generation elicited by Fusarium oxysporum in Arabidopsis roots.</title>
        <authorList>
            <person name="Gupta K.J."/>
            <person name="Mur L.A."/>
            <person name="Brotman Y."/>
        </authorList>
    </citation>
    <scope>INDUCTION BY FUSARIUM OXYSPORUM</scope>
    <source>
        <strain>cv. Columbia</strain>
    </source>
</reference>
<reference key="9">
    <citation type="journal article" date="2016" name="J. Exp. Bot.">
        <title>Transcriptional regulation of receptor-like protein genes by environmental stresses and hormones and their overexpression activities in Arabidopsis thaliana.</title>
        <authorList>
            <person name="Wu J."/>
            <person name="Liu Z."/>
            <person name="Zhang Z."/>
            <person name="Lv Y."/>
            <person name="Yang N."/>
            <person name="Zhang G."/>
            <person name="Wu M."/>
            <person name="Lv S."/>
            <person name="Pan L."/>
            <person name="Joosten M.H."/>
            <person name="Wang G."/>
        </authorList>
    </citation>
    <scope>INDUCTION BY NACL AND MANNITOL</scope>
</reference>
<keyword id="KW-1003">Cell membrane</keyword>
<keyword id="KW-0325">Glycoprotein</keyword>
<keyword id="KW-0433">Leucine-rich repeat</keyword>
<keyword id="KW-0472">Membrane</keyword>
<keyword id="KW-0611">Plant defense</keyword>
<keyword id="KW-0675">Receptor</keyword>
<keyword id="KW-1185">Reference proteome</keyword>
<keyword id="KW-0677">Repeat</keyword>
<keyword id="KW-0732">Signal</keyword>
<keyword id="KW-0812">Transmembrane</keyword>
<keyword id="KW-1133">Transmembrane helix</keyword>